<reference key="1">
    <citation type="journal article" date="1989" name="EMBO J.">
        <title>MyoD expression in the forming somites is an early response to mesoderm induction in Xenopus embryos.</title>
        <authorList>
            <person name="Hopwood N.D."/>
            <person name="Pluck A."/>
            <person name="Gurdon J.B."/>
        </authorList>
    </citation>
    <scope>NUCLEOTIDE SEQUENCE [MRNA]</scope>
</reference>
<reference key="2">
    <citation type="journal article" date="1990" name="Mol. Cell. Biol.">
        <title>Two distinct Xenopus genes with homology to MyoD1 are expressed before somite formation in early embryogenesis.</title>
        <authorList>
            <person name="Scales J.B."/>
            <person name="Olson E.N."/>
            <person name="Perry M."/>
        </authorList>
    </citation>
    <scope>NUCLEOTIDE SEQUENCE [MRNA]</scope>
</reference>
<reference key="3">
    <citation type="journal article" date="1990" name="Development">
        <title>The Xenopus MyoD gene: an unlocalised maternal mRNA predates lineage-restricted expression in the early embryo.</title>
        <authorList>
            <person name="Harvey R.P."/>
        </authorList>
    </citation>
    <scope>NUCLEOTIDE SEQUENCE [MRNA]</scope>
</reference>
<reference key="4">
    <citation type="journal article" date="2016" name="Nature">
        <title>Genome evolution in the allotetraploid frog Xenopus laevis.</title>
        <authorList>
            <person name="Session A.M."/>
            <person name="Uno Y."/>
            <person name="Kwon T."/>
            <person name="Chapman J.A."/>
            <person name="Toyoda A."/>
            <person name="Takahashi S."/>
            <person name="Fukui A."/>
            <person name="Hikosaka A."/>
            <person name="Suzuki A."/>
            <person name="Kondo M."/>
            <person name="van Heeringen S.J."/>
            <person name="Quigley I."/>
            <person name="Heinz S."/>
            <person name="Ogino H."/>
            <person name="Ochi H."/>
            <person name="Hellsten U."/>
            <person name="Lyons J.B."/>
            <person name="Simakov O."/>
            <person name="Putnam N."/>
            <person name="Stites J."/>
            <person name="Kuroki Y."/>
            <person name="Tanaka T."/>
            <person name="Michiue T."/>
            <person name="Watanabe M."/>
            <person name="Bogdanovic O."/>
            <person name="Lister R."/>
            <person name="Georgiou G."/>
            <person name="Paranjpe S.S."/>
            <person name="van Kruijsbergen I."/>
            <person name="Shu S."/>
            <person name="Carlson J."/>
            <person name="Kinoshita T."/>
            <person name="Ohta Y."/>
            <person name="Mawaribuchi S."/>
            <person name="Jenkins J."/>
            <person name="Grimwood J."/>
            <person name="Schmutz J."/>
            <person name="Mitros T."/>
            <person name="Mozaffari S.V."/>
            <person name="Suzuki Y."/>
            <person name="Haramoto Y."/>
            <person name="Yamamoto T.S."/>
            <person name="Takagi C."/>
            <person name="Heald R."/>
            <person name="Miller K."/>
            <person name="Haudenschild C."/>
            <person name="Kitzman J."/>
            <person name="Nakayama T."/>
            <person name="Izutsu Y."/>
            <person name="Robert J."/>
            <person name="Fortriede J."/>
            <person name="Burns K."/>
            <person name="Lotay V."/>
            <person name="Karimi K."/>
            <person name="Yasuoka Y."/>
            <person name="Dichmann D.S."/>
            <person name="Flajnik M.F."/>
            <person name="Houston D.W."/>
            <person name="Shendure J."/>
            <person name="DuPasquier L."/>
            <person name="Vize P.D."/>
            <person name="Zorn A.M."/>
            <person name="Ito M."/>
            <person name="Marcotte E.M."/>
            <person name="Wallingford J.B."/>
            <person name="Ito Y."/>
            <person name="Asashima M."/>
            <person name="Ueno N."/>
            <person name="Matsuda Y."/>
            <person name="Veenstra G.J."/>
            <person name="Fujiyama A."/>
            <person name="Harland R.M."/>
            <person name="Taira M."/>
            <person name="Rokhsar D.S."/>
        </authorList>
    </citation>
    <scope>NUCLEOTIDE SEQUENCE [LARGE SCALE GENOMIC DNA]</scope>
    <source>
        <strain>J</strain>
    </source>
</reference>
<reference key="5">
    <citation type="submission" date="2005-10" db="EMBL/GenBank/DDBJ databases">
        <authorList>
            <consortium name="NIH - Xenopus Gene Collection (XGC) project"/>
        </authorList>
    </citation>
    <scope>NUCLEOTIDE SEQUENCE [LARGE SCALE MRNA]</scope>
    <source>
        <tissue>Embryo</tissue>
    </source>
</reference>
<dbReference type="EMBL" id="X16106">
    <property type="protein sequence ID" value="CAA34232.1"/>
    <property type="molecule type" value="mRNA"/>
</dbReference>
<dbReference type="EMBL" id="M31116">
    <property type="protein sequence ID" value="AAA49900.1"/>
    <property type="molecule type" value="mRNA"/>
</dbReference>
<dbReference type="EMBL" id="CM004473">
    <property type="protein sequence ID" value="OCT82147.1"/>
    <property type="molecule type" value="Genomic_DNA"/>
</dbReference>
<dbReference type="EMBL" id="BC106319">
    <property type="protein sequence ID" value="AAI06320.1"/>
    <property type="molecule type" value="mRNA"/>
</dbReference>
<dbReference type="PIR" id="A34783">
    <property type="entry name" value="A34783"/>
</dbReference>
<dbReference type="SMR" id="P13904"/>
<dbReference type="STRING" id="8355.P13904"/>
<dbReference type="PaxDb" id="8355-P13904"/>
<dbReference type="AGR" id="Xenbase:XB-GENE-1017506"/>
<dbReference type="Xenbase" id="XB-GENE-1017506">
    <property type="gene designation" value="myod1.S"/>
</dbReference>
<dbReference type="OMA" id="GPMEMTE"/>
<dbReference type="Proteomes" id="UP000186698">
    <property type="component" value="Unplaced"/>
</dbReference>
<dbReference type="Proteomes" id="UP000694892">
    <property type="component" value="Chromosome 4S"/>
</dbReference>
<dbReference type="GO" id="GO:0005634">
    <property type="term" value="C:nucleus"/>
    <property type="evidence" value="ECO:0007669"/>
    <property type="project" value="UniProtKB-SubCell"/>
</dbReference>
<dbReference type="GO" id="GO:0001216">
    <property type="term" value="F:DNA-binding transcription activator activity"/>
    <property type="evidence" value="ECO:0000250"/>
    <property type="project" value="UniProtKB"/>
</dbReference>
<dbReference type="GO" id="GO:0000981">
    <property type="term" value="F:DNA-binding transcription factor activity, RNA polymerase II-specific"/>
    <property type="evidence" value="ECO:0000318"/>
    <property type="project" value="GO_Central"/>
</dbReference>
<dbReference type="GO" id="GO:0070888">
    <property type="term" value="F:E-box binding"/>
    <property type="evidence" value="ECO:0000250"/>
    <property type="project" value="UniProtKB"/>
</dbReference>
<dbReference type="GO" id="GO:1990841">
    <property type="term" value="F:promoter-specific chromatin binding"/>
    <property type="evidence" value="ECO:0000250"/>
    <property type="project" value="UniProtKB"/>
</dbReference>
<dbReference type="GO" id="GO:0046983">
    <property type="term" value="F:protein dimerization activity"/>
    <property type="evidence" value="ECO:0007669"/>
    <property type="project" value="InterPro"/>
</dbReference>
<dbReference type="GO" id="GO:0000978">
    <property type="term" value="F:RNA polymerase II cis-regulatory region sequence-specific DNA binding"/>
    <property type="evidence" value="ECO:0000318"/>
    <property type="project" value="GO_Central"/>
</dbReference>
<dbReference type="GO" id="GO:0071392">
    <property type="term" value="P:cellular response to estradiol stimulus"/>
    <property type="evidence" value="ECO:0000250"/>
    <property type="project" value="UniProtKB"/>
</dbReference>
<dbReference type="GO" id="GO:0044344">
    <property type="term" value="P:cellular response to fibroblast growth factor stimulus"/>
    <property type="evidence" value="ECO:0000316"/>
    <property type="project" value="BHF-UCL"/>
</dbReference>
<dbReference type="GO" id="GO:0045663">
    <property type="term" value="P:positive regulation of myoblast differentiation"/>
    <property type="evidence" value="ECO:0000318"/>
    <property type="project" value="GO_Central"/>
</dbReference>
<dbReference type="GO" id="GO:0048743">
    <property type="term" value="P:positive regulation of skeletal muscle fiber development"/>
    <property type="evidence" value="ECO:0000318"/>
    <property type="project" value="GO_Central"/>
</dbReference>
<dbReference type="GO" id="GO:1905382">
    <property type="term" value="P:positive regulation of snRNA transcription by RNA polymerase II"/>
    <property type="evidence" value="ECO:0000250"/>
    <property type="project" value="UniProtKB"/>
</dbReference>
<dbReference type="GO" id="GO:0045944">
    <property type="term" value="P:positive regulation of transcription by RNA polymerase II"/>
    <property type="evidence" value="ECO:0000250"/>
    <property type="project" value="UniProtKB"/>
</dbReference>
<dbReference type="GO" id="GO:0006357">
    <property type="term" value="P:regulation of transcription by RNA polymerase II"/>
    <property type="evidence" value="ECO:0000318"/>
    <property type="project" value="GO_Central"/>
</dbReference>
<dbReference type="GO" id="GO:0035914">
    <property type="term" value="P:skeletal muscle cell differentiation"/>
    <property type="evidence" value="ECO:0000318"/>
    <property type="project" value="GO_Central"/>
</dbReference>
<dbReference type="CDD" id="cd18936">
    <property type="entry name" value="bHLH_TS_MYOD1_Myf3"/>
    <property type="match status" value="1"/>
</dbReference>
<dbReference type="FunFam" id="4.10.280.10:FF:000005">
    <property type="entry name" value="Myogenic factor"/>
    <property type="match status" value="1"/>
</dbReference>
<dbReference type="Gene3D" id="4.10.280.10">
    <property type="entry name" value="Helix-loop-helix DNA-binding domain"/>
    <property type="match status" value="1"/>
</dbReference>
<dbReference type="InterPro" id="IPR011598">
    <property type="entry name" value="bHLH_dom"/>
</dbReference>
<dbReference type="InterPro" id="IPR036638">
    <property type="entry name" value="HLH_DNA-bd_sf"/>
</dbReference>
<dbReference type="InterPro" id="IPR022032">
    <property type="entry name" value="Myf5"/>
</dbReference>
<dbReference type="InterPro" id="IPR002546">
    <property type="entry name" value="MyoD_N"/>
</dbReference>
<dbReference type="InterPro" id="IPR039704">
    <property type="entry name" value="Myogenic_factor"/>
</dbReference>
<dbReference type="PANTHER" id="PTHR11534:SF2">
    <property type="entry name" value="MYOBLAST DETERMINATION PROTEIN 1"/>
    <property type="match status" value="1"/>
</dbReference>
<dbReference type="PANTHER" id="PTHR11534">
    <property type="entry name" value="MYOGENIC FACTOR"/>
    <property type="match status" value="1"/>
</dbReference>
<dbReference type="Pfam" id="PF01586">
    <property type="entry name" value="Basic"/>
    <property type="match status" value="1"/>
</dbReference>
<dbReference type="Pfam" id="PF00010">
    <property type="entry name" value="HLH"/>
    <property type="match status" value="1"/>
</dbReference>
<dbReference type="Pfam" id="PF12232">
    <property type="entry name" value="Myf5"/>
    <property type="match status" value="1"/>
</dbReference>
<dbReference type="SMART" id="SM00520">
    <property type="entry name" value="BASIC"/>
    <property type="match status" value="1"/>
</dbReference>
<dbReference type="SMART" id="SM00353">
    <property type="entry name" value="HLH"/>
    <property type="match status" value="1"/>
</dbReference>
<dbReference type="SUPFAM" id="SSF47459">
    <property type="entry name" value="HLH, helix-loop-helix DNA-binding domain"/>
    <property type="match status" value="1"/>
</dbReference>
<dbReference type="PROSITE" id="PS50888">
    <property type="entry name" value="BHLH"/>
    <property type="match status" value="1"/>
</dbReference>
<sequence length="289" mass="32307">MELLPPPLRDMEVTEGSLCAFPTPDDFYDDPCFNTSDMSFFEDLDPRLVHVTLLKPEEPHHNEDEHVRAPSGHHQAGRCLLWACKACKRKTTNADRRKAATMRERRRLSKVNEAFETLKRYTSTNPNQRLPKVEILRNAIRYIESLQALLHDQDEAFYPVLEHYSGDSDASSPRSNCSDGMMDYNSPPCGSRRRNSYDSSFYSDSPNDSRLGKSSVISSLDCLSSIVERISTQSPSCPVPTAVDSGSEGSPCSPLQGETLSERVITIPSPSNTCTQLSQDPSSTIYHVL</sequence>
<name>MYODA_XENLA</name>
<feature type="chain" id="PRO_0000127370" description="Myoblast determination protein 1 homolog A">
    <location>
        <begin position="1"/>
        <end position="289"/>
    </location>
</feature>
<feature type="domain" description="bHLH" evidence="2">
    <location>
        <begin position="95"/>
        <end position="146"/>
    </location>
</feature>
<feature type="region of interest" description="Disordered" evidence="3">
    <location>
        <begin position="165"/>
        <end position="212"/>
    </location>
</feature>
<feature type="compositionally biased region" description="Polar residues" evidence="3">
    <location>
        <begin position="168"/>
        <end position="178"/>
    </location>
</feature>
<feature type="compositionally biased region" description="Polar residues" evidence="3">
    <location>
        <begin position="197"/>
        <end position="208"/>
    </location>
</feature>
<feature type="sequence conflict" description="In Ref. 2; AAA49900." evidence="4" ref="2">
    <original>LQ</original>
    <variation>A</variation>
    <location>
        <begin position="255"/>
        <end position="256"/>
    </location>
</feature>
<gene>
    <name type="primary">myod1-a</name>
    <name type="synonym">mf1</name>
    <name type="synonym">myod</name>
</gene>
<protein>
    <recommendedName>
        <fullName>Myoblast determination protein 1 homolog A</fullName>
    </recommendedName>
    <alternativeName>
        <fullName>Myogenic factor 1</fullName>
    </alternativeName>
</protein>
<keyword id="KW-0010">Activator</keyword>
<keyword id="KW-0217">Developmental protein</keyword>
<keyword id="KW-0221">Differentiation</keyword>
<keyword id="KW-0238">DNA-binding</keyword>
<keyword id="KW-0517">Myogenesis</keyword>
<keyword id="KW-0539">Nucleus</keyword>
<keyword id="KW-1185">Reference proteome</keyword>
<keyword id="KW-0804">Transcription</keyword>
<keyword id="KW-0805">Transcription regulation</keyword>
<evidence type="ECO:0000250" key="1"/>
<evidence type="ECO:0000255" key="2">
    <source>
        <dbReference type="PROSITE-ProRule" id="PRU00981"/>
    </source>
</evidence>
<evidence type="ECO:0000256" key="3">
    <source>
        <dbReference type="SAM" id="MobiDB-lite"/>
    </source>
</evidence>
<evidence type="ECO:0000305" key="4"/>
<proteinExistence type="evidence at transcript level"/>
<accession>P13904</accession>
<accession>A0A1L8GE03</accession>
<accession>Q3KQ98</accession>
<organism>
    <name type="scientific">Xenopus laevis</name>
    <name type="common">African clawed frog</name>
    <dbReference type="NCBI Taxonomy" id="8355"/>
    <lineage>
        <taxon>Eukaryota</taxon>
        <taxon>Metazoa</taxon>
        <taxon>Chordata</taxon>
        <taxon>Craniata</taxon>
        <taxon>Vertebrata</taxon>
        <taxon>Euteleostomi</taxon>
        <taxon>Amphibia</taxon>
        <taxon>Batrachia</taxon>
        <taxon>Anura</taxon>
        <taxon>Pipoidea</taxon>
        <taxon>Pipidae</taxon>
        <taxon>Xenopodinae</taxon>
        <taxon>Xenopus</taxon>
        <taxon>Xenopus</taxon>
    </lineage>
</organism>
<comment type="function">
    <text evidence="1">May act as a transcriptional activator that promotes transcription of muscle-specific target genes and plays a role in muscle differentiation.</text>
</comment>
<comment type="subunit">
    <text>Efficient DNA binding requires dimerization with another bHLH protein.</text>
</comment>
<comment type="subcellular location">
    <subcellularLocation>
        <location>Nucleus</location>
    </subcellularLocation>
</comment>
<comment type="developmental stage">
    <text>Expression is specific to the mesoderm of the gastrula.</text>
</comment>